<accession>P0A2T4</accession>
<accession>Q56069</accession>
<accession>Q8Z702</accession>
<comment type="function">
    <text>Repressor of the marRAB operon which is involved in the activation of both antibiotic resistance and oxidative stress genes. Binds to the marO operator/promoter site.</text>
</comment>
<name>MARR_SALTY</name>
<feature type="chain" id="PRO_0000054364" description="Multiple antibiotic resistance protein MarR">
    <location>
        <begin position="1"/>
        <end position="144"/>
    </location>
</feature>
<feature type="domain" description="HTH marR-type" evidence="1">
    <location>
        <begin position="11"/>
        <end position="144"/>
    </location>
</feature>
<proteinExistence type="predicted"/>
<evidence type="ECO:0000255" key="1">
    <source>
        <dbReference type="PROSITE-ProRule" id="PRU00345"/>
    </source>
</evidence>
<dbReference type="EMBL" id="U54468">
    <property type="protein sequence ID" value="AAC44976.1"/>
    <property type="molecule type" value="Genomic_DNA"/>
</dbReference>
<dbReference type="EMBL" id="AE006468">
    <property type="protein sequence ID" value="AAL20439.1"/>
    <property type="molecule type" value="Genomic_DNA"/>
</dbReference>
<dbReference type="PIR" id="T11756">
    <property type="entry name" value="T11756"/>
</dbReference>
<dbReference type="RefSeq" id="NP_460480.1">
    <property type="nucleotide sequence ID" value="NC_003197.2"/>
</dbReference>
<dbReference type="RefSeq" id="WP_000843434.1">
    <property type="nucleotide sequence ID" value="NC_003197.2"/>
</dbReference>
<dbReference type="SMR" id="P0A2T4"/>
<dbReference type="STRING" id="99287.STM1520"/>
<dbReference type="PaxDb" id="99287-STM1520"/>
<dbReference type="GeneID" id="1253038"/>
<dbReference type="KEGG" id="stm:STM1520"/>
<dbReference type="PATRIC" id="fig|99287.12.peg.1608"/>
<dbReference type="HOGENOM" id="CLU_083287_18_5_6"/>
<dbReference type="OMA" id="YEATMVT"/>
<dbReference type="PhylomeDB" id="P0A2T4"/>
<dbReference type="BioCyc" id="SENT99287:STM1520-MONOMER"/>
<dbReference type="Proteomes" id="UP000001014">
    <property type="component" value="Chromosome"/>
</dbReference>
<dbReference type="GO" id="GO:0003677">
    <property type="term" value="F:DNA binding"/>
    <property type="evidence" value="ECO:0007669"/>
    <property type="project" value="UniProtKB-KW"/>
</dbReference>
<dbReference type="GO" id="GO:0003700">
    <property type="term" value="F:DNA-binding transcription factor activity"/>
    <property type="evidence" value="ECO:0007669"/>
    <property type="project" value="InterPro"/>
</dbReference>
<dbReference type="GO" id="GO:0006355">
    <property type="term" value="P:regulation of DNA-templated transcription"/>
    <property type="evidence" value="ECO:0000318"/>
    <property type="project" value="GO_Central"/>
</dbReference>
<dbReference type="GO" id="GO:0046677">
    <property type="term" value="P:response to antibiotic"/>
    <property type="evidence" value="ECO:0007669"/>
    <property type="project" value="UniProtKB-KW"/>
</dbReference>
<dbReference type="GO" id="GO:0006950">
    <property type="term" value="P:response to stress"/>
    <property type="evidence" value="ECO:0000318"/>
    <property type="project" value="GO_Central"/>
</dbReference>
<dbReference type="FunFam" id="1.10.10.10:FF:000149">
    <property type="entry name" value="Multiple antibiotic resistance transcriptional regulator MarR"/>
    <property type="match status" value="1"/>
</dbReference>
<dbReference type="Gene3D" id="1.10.10.10">
    <property type="entry name" value="Winged helix-like DNA-binding domain superfamily/Winged helix DNA-binding domain"/>
    <property type="match status" value="1"/>
</dbReference>
<dbReference type="InterPro" id="IPR000835">
    <property type="entry name" value="HTH_MarR-typ"/>
</dbReference>
<dbReference type="InterPro" id="IPR039422">
    <property type="entry name" value="MarR/SlyA-like"/>
</dbReference>
<dbReference type="InterPro" id="IPR023187">
    <property type="entry name" value="Tscrpt_reg_MarR-type_CS"/>
</dbReference>
<dbReference type="InterPro" id="IPR036388">
    <property type="entry name" value="WH-like_DNA-bd_sf"/>
</dbReference>
<dbReference type="InterPro" id="IPR036390">
    <property type="entry name" value="WH_DNA-bd_sf"/>
</dbReference>
<dbReference type="NCBIfam" id="NF008565">
    <property type="entry name" value="PRK11512.1"/>
    <property type="match status" value="1"/>
</dbReference>
<dbReference type="PANTHER" id="PTHR33164:SF87">
    <property type="entry name" value="MULTIPLE ANTIBIOTIC RESISTANCE PROTEIN MARR"/>
    <property type="match status" value="1"/>
</dbReference>
<dbReference type="PANTHER" id="PTHR33164">
    <property type="entry name" value="TRANSCRIPTIONAL REGULATOR, MARR FAMILY"/>
    <property type="match status" value="1"/>
</dbReference>
<dbReference type="Pfam" id="PF01047">
    <property type="entry name" value="MarR"/>
    <property type="match status" value="1"/>
</dbReference>
<dbReference type="PRINTS" id="PR00598">
    <property type="entry name" value="HTHMARR"/>
</dbReference>
<dbReference type="SMART" id="SM00347">
    <property type="entry name" value="HTH_MARR"/>
    <property type="match status" value="1"/>
</dbReference>
<dbReference type="SUPFAM" id="SSF46785">
    <property type="entry name" value="Winged helix' DNA-binding domain"/>
    <property type="match status" value="1"/>
</dbReference>
<dbReference type="PROSITE" id="PS01117">
    <property type="entry name" value="HTH_MARR_1"/>
    <property type="match status" value="1"/>
</dbReference>
<dbReference type="PROSITE" id="PS50995">
    <property type="entry name" value="HTH_MARR_2"/>
    <property type="match status" value="1"/>
</dbReference>
<keyword id="KW-0046">Antibiotic resistance</keyword>
<keyword id="KW-0238">DNA-binding</keyword>
<keyword id="KW-1185">Reference proteome</keyword>
<keyword id="KW-0678">Repressor</keyword>
<keyword id="KW-0804">Transcription</keyword>
<keyword id="KW-0805">Transcription regulation</keyword>
<reference key="1">
    <citation type="journal article" date="1997" name="J. Bacteriol.">
        <title>The Salmonella typhimurium mar locus: molecular and genetic analyses and assessment of its role in virulence.</title>
        <authorList>
            <person name="Sulavik M.C."/>
            <person name="Dazer M."/>
            <person name="Miller P.F."/>
        </authorList>
    </citation>
    <scope>NUCLEOTIDE SEQUENCE [GENOMIC DNA]</scope>
    <source>
        <strain>X3181</strain>
    </source>
</reference>
<reference key="2">
    <citation type="journal article" date="2001" name="Nature">
        <title>Complete genome sequence of Salmonella enterica serovar Typhimurium LT2.</title>
        <authorList>
            <person name="McClelland M."/>
            <person name="Sanderson K.E."/>
            <person name="Spieth J."/>
            <person name="Clifton S.W."/>
            <person name="Latreille P."/>
            <person name="Courtney L."/>
            <person name="Porwollik S."/>
            <person name="Ali J."/>
            <person name="Dante M."/>
            <person name="Du F."/>
            <person name="Hou S."/>
            <person name="Layman D."/>
            <person name="Leonard S."/>
            <person name="Nguyen C."/>
            <person name="Scott K."/>
            <person name="Holmes A."/>
            <person name="Grewal N."/>
            <person name="Mulvaney E."/>
            <person name="Ryan E."/>
            <person name="Sun H."/>
            <person name="Florea L."/>
            <person name="Miller W."/>
            <person name="Stoneking T."/>
            <person name="Nhan M."/>
            <person name="Waterston R."/>
            <person name="Wilson R.K."/>
        </authorList>
    </citation>
    <scope>NUCLEOTIDE SEQUENCE [LARGE SCALE GENOMIC DNA]</scope>
    <source>
        <strain>LT2 / SGSC1412 / ATCC 700720</strain>
    </source>
</reference>
<gene>
    <name type="primary">marR</name>
    <name type="ordered locus">STM1520</name>
</gene>
<organism>
    <name type="scientific">Salmonella typhimurium (strain LT2 / SGSC1412 / ATCC 700720)</name>
    <dbReference type="NCBI Taxonomy" id="99287"/>
    <lineage>
        <taxon>Bacteria</taxon>
        <taxon>Pseudomonadati</taxon>
        <taxon>Pseudomonadota</taxon>
        <taxon>Gammaproteobacteria</taxon>
        <taxon>Enterobacterales</taxon>
        <taxon>Enterobacteriaceae</taxon>
        <taxon>Salmonella</taxon>
    </lineage>
</organism>
<protein>
    <recommendedName>
        <fullName>Multiple antibiotic resistance protein MarR</fullName>
    </recommendedName>
</protein>
<sequence>MKSTSDLFNEIIPLGRLIYMVNQKKDRLLNNYLSPLDITATQFKVLCSIRCAGCITPVELKKVLSVDLGALTRMLDRLLCKGWIERLPNPNDKRGVLVKLTPDGAAICEQCHQRPGQDLHQELTKNLTADEVATLEYLLKKILP</sequence>